<proteinExistence type="inferred from homology"/>
<reference key="1">
    <citation type="journal article" date="1998" name="Science">
        <title>Complete genome sequence of Treponema pallidum, the syphilis spirochete.</title>
        <authorList>
            <person name="Fraser C.M."/>
            <person name="Norris S.J."/>
            <person name="Weinstock G.M."/>
            <person name="White O."/>
            <person name="Sutton G.G."/>
            <person name="Dodson R.J."/>
            <person name="Gwinn M.L."/>
            <person name="Hickey E.K."/>
            <person name="Clayton R.A."/>
            <person name="Ketchum K.A."/>
            <person name="Sodergren E."/>
            <person name="Hardham J.M."/>
            <person name="McLeod M.P."/>
            <person name="Salzberg S.L."/>
            <person name="Peterson J.D."/>
            <person name="Khalak H.G."/>
            <person name="Richardson D.L."/>
            <person name="Howell J.K."/>
            <person name="Chidambaram M."/>
            <person name="Utterback T.R."/>
            <person name="McDonald L.A."/>
            <person name="Artiach P."/>
            <person name="Bowman C."/>
            <person name="Cotton M.D."/>
            <person name="Fujii C."/>
            <person name="Garland S.A."/>
            <person name="Hatch B."/>
            <person name="Horst K."/>
            <person name="Roberts K.M."/>
            <person name="Sandusky M."/>
            <person name="Weidman J.F."/>
            <person name="Smith H.O."/>
            <person name="Venter J.C."/>
        </authorList>
    </citation>
    <scope>NUCLEOTIDE SEQUENCE [LARGE SCALE GENOMIC DNA]</scope>
    <source>
        <strain>Nichols</strain>
    </source>
</reference>
<dbReference type="EC" id="1.8.4.12"/>
<dbReference type="EC" id="1.8.4.11"/>
<dbReference type="EMBL" id="AE000520">
    <property type="protein sequence ID" value="AAC65608.1"/>
    <property type="molecule type" value="Genomic_DNA"/>
</dbReference>
<dbReference type="PIR" id="G71300">
    <property type="entry name" value="G71300"/>
</dbReference>
<dbReference type="RefSeq" id="WP_010882079.1">
    <property type="nucleotide sequence ID" value="NC_000919.1"/>
</dbReference>
<dbReference type="SMR" id="O83641"/>
<dbReference type="STRING" id="243276.TP_0633"/>
<dbReference type="EnsemblBacteria" id="AAC65608">
    <property type="protein sequence ID" value="AAC65608"/>
    <property type="gene ID" value="TP_0633"/>
</dbReference>
<dbReference type="KEGG" id="tpa:TP_0633"/>
<dbReference type="eggNOG" id="COG0225">
    <property type="taxonomic scope" value="Bacteria"/>
</dbReference>
<dbReference type="eggNOG" id="COG0229">
    <property type="taxonomic scope" value="Bacteria"/>
</dbReference>
<dbReference type="HOGENOM" id="CLU_031040_7_1_12"/>
<dbReference type="OrthoDB" id="4174719at2"/>
<dbReference type="Proteomes" id="UP000000811">
    <property type="component" value="Chromosome"/>
</dbReference>
<dbReference type="GO" id="GO:0033744">
    <property type="term" value="F:L-methionine:thioredoxin-disulfide S-oxidoreductase activity"/>
    <property type="evidence" value="ECO:0007669"/>
    <property type="project" value="RHEA"/>
</dbReference>
<dbReference type="GO" id="GO:0033743">
    <property type="term" value="F:peptide-methionine (R)-S-oxide reductase activity"/>
    <property type="evidence" value="ECO:0007669"/>
    <property type="project" value="UniProtKB-EC"/>
</dbReference>
<dbReference type="GO" id="GO:0008113">
    <property type="term" value="F:peptide-methionine (S)-S-oxide reductase activity"/>
    <property type="evidence" value="ECO:0007669"/>
    <property type="project" value="UniProtKB-UniRule"/>
</dbReference>
<dbReference type="GO" id="GO:0036211">
    <property type="term" value="P:protein modification process"/>
    <property type="evidence" value="ECO:0007669"/>
    <property type="project" value="UniProtKB-UniRule"/>
</dbReference>
<dbReference type="FunFam" id="2.170.150.20:FF:000003">
    <property type="entry name" value="Peptide methionine sulfoxide reductase MsrB"/>
    <property type="match status" value="1"/>
</dbReference>
<dbReference type="Gene3D" id="2.170.150.20">
    <property type="entry name" value="Peptide methionine sulfoxide reductase"/>
    <property type="match status" value="1"/>
</dbReference>
<dbReference type="Gene3D" id="3.30.1060.10">
    <property type="entry name" value="Peptide methionine sulphoxide reductase MsrA"/>
    <property type="match status" value="1"/>
</dbReference>
<dbReference type="HAMAP" id="MF_01401">
    <property type="entry name" value="MsrA"/>
    <property type="match status" value="1"/>
</dbReference>
<dbReference type="InterPro" id="IPR002569">
    <property type="entry name" value="Met_Sox_Rdtase_MsrA_dom"/>
</dbReference>
<dbReference type="InterPro" id="IPR036509">
    <property type="entry name" value="Met_Sox_Rdtase_MsrA_sf"/>
</dbReference>
<dbReference type="InterPro" id="IPR002579">
    <property type="entry name" value="Met_Sox_Rdtase_MsrB_dom"/>
</dbReference>
<dbReference type="InterPro" id="IPR011057">
    <property type="entry name" value="Mss4-like_sf"/>
</dbReference>
<dbReference type="NCBIfam" id="TIGR00401">
    <property type="entry name" value="msrA"/>
    <property type="match status" value="1"/>
</dbReference>
<dbReference type="NCBIfam" id="TIGR00357">
    <property type="entry name" value="peptide-methionine (R)-S-oxide reductase MsrB"/>
    <property type="match status" value="1"/>
</dbReference>
<dbReference type="NCBIfam" id="NF004042">
    <property type="entry name" value="PRK05550.1"/>
    <property type="match status" value="1"/>
</dbReference>
<dbReference type="PANTHER" id="PTHR43774">
    <property type="entry name" value="PEPTIDE METHIONINE SULFOXIDE REDUCTASE"/>
    <property type="match status" value="1"/>
</dbReference>
<dbReference type="PANTHER" id="PTHR43774:SF1">
    <property type="entry name" value="PEPTIDE METHIONINE SULFOXIDE REDUCTASE MSRA 2"/>
    <property type="match status" value="1"/>
</dbReference>
<dbReference type="Pfam" id="PF01625">
    <property type="entry name" value="PMSR"/>
    <property type="match status" value="1"/>
</dbReference>
<dbReference type="Pfam" id="PF01641">
    <property type="entry name" value="SelR"/>
    <property type="match status" value="1"/>
</dbReference>
<dbReference type="SUPFAM" id="SSF51316">
    <property type="entry name" value="Mss4-like"/>
    <property type="match status" value="1"/>
</dbReference>
<dbReference type="SUPFAM" id="SSF55068">
    <property type="entry name" value="Peptide methionine sulfoxide reductase"/>
    <property type="match status" value="1"/>
</dbReference>
<dbReference type="PROSITE" id="PS51790">
    <property type="entry name" value="MSRB"/>
    <property type="match status" value="1"/>
</dbReference>
<feature type="chain" id="PRO_0000138525" description="Peptide methionine sulfoxide reductase MsrB/MsrA">
    <location>
        <begin position="1"/>
        <end position="291"/>
    </location>
</feature>
<feature type="domain" description="MsrB" evidence="2">
    <location>
        <begin position="1"/>
        <end position="124"/>
    </location>
</feature>
<feature type="region of interest" description="Peptide methionine sulfoxide reductase A">
    <location>
        <begin position="127"/>
        <end position="284"/>
    </location>
</feature>
<feature type="active site" description="Nucleophile" evidence="2">
    <location>
        <position position="113"/>
    </location>
</feature>
<feature type="active site" evidence="1">
    <location>
        <position position="135"/>
    </location>
</feature>
<comment type="function">
    <text evidence="1">Has an important function as a repair enzyme for proteins that have been inactivated by oxidation. Catalyzes the reversible oxidation-reduction of methionine sulfoxide in proteins to methionine (By similarity).</text>
</comment>
<comment type="catalytic activity">
    <reaction>
        <text>L-methionyl-[protein] + [thioredoxin]-disulfide + H2O = L-methionyl-(R)-S-oxide-[protein] + [thioredoxin]-dithiol</text>
        <dbReference type="Rhea" id="RHEA:24164"/>
        <dbReference type="Rhea" id="RHEA-COMP:10698"/>
        <dbReference type="Rhea" id="RHEA-COMP:10700"/>
        <dbReference type="Rhea" id="RHEA-COMP:12313"/>
        <dbReference type="Rhea" id="RHEA-COMP:12314"/>
        <dbReference type="ChEBI" id="CHEBI:15377"/>
        <dbReference type="ChEBI" id="CHEBI:16044"/>
        <dbReference type="ChEBI" id="CHEBI:29950"/>
        <dbReference type="ChEBI" id="CHEBI:45764"/>
        <dbReference type="ChEBI" id="CHEBI:50058"/>
        <dbReference type="EC" id="1.8.4.12"/>
    </reaction>
</comment>
<comment type="catalytic activity">
    <reaction>
        <text>L-methionyl-[protein] + [thioredoxin]-disulfide + H2O = L-methionyl-(S)-S-oxide-[protein] + [thioredoxin]-dithiol</text>
        <dbReference type="Rhea" id="RHEA:14217"/>
        <dbReference type="Rhea" id="RHEA-COMP:10698"/>
        <dbReference type="Rhea" id="RHEA-COMP:10700"/>
        <dbReference type="Rhea" id="RHEA-COMP:12313"/>
        <dbReference type="Rhea" id="RHEA-COMP:12315"/>
        <dbReference type="ChEBI" id="CHEBI:15377"/>
        <dbReference type="ChEBI" id="CHEBI:16044"/>
        <dbReference type="ChEBI" id="CHEBI:29950"/>
        <dbReference type="ChEBI" id="CHEBI:44120"/>
        <dbReference type="ChEBI" id="CHEBI:50058"/>
        <dbReference type="EC" id="1.8.4.11"/>
    </reaction>
</comment>
<comment type="catalytic activity">
    <reaction>
        <text>[thioredoxin]-disulfide + L-methionine + H2O = L-methionine (S)-S-oxide + [thioredoxin]-dithiol</text>
        <dbReference type="Rhea" id="RHEA:19993"/>
        <dbReference type="Rhea" id="RHEA-COMP:10698"/>
        <dbReference type="Rhea" id="RHEA-COMP:10700"/>
        <dbReference type="ChEBI" id="CHEBI:15377"/>
        <dbReference type="ChEBI" id="CHEBI:29950"/>
        <dbReference type="ChEBI" id="CHEBI:50058"/>
        <dbReference type="ChEBI" id="CHEBI:57844"/>
        <dbReference type="ChEBI" id="CHEBI:58772"/>
        <dbReference type="EC" id="1.8.4.11"/>
    </reaction>
</comment>
<comment type="similarity">
    <text evidence="3">In the N-terminal section; belongs to the MsrB Met sulfoxide reductase family.</text>
</comment>
<comment type="similarity">
    <text evidence="3">In the C-terminal section; belongs to the MsrA Met sulfoxide reductase family.</text>
</comment>
<name>MSRAB_TREPA</name>
<organism>
    <name type="scientific">Treponema pallidum (strain Nichols)</name>
    <dbReference type="NCBI Taxonomy" id="243276"/>
    <lineage>
        <taxon>Bacteria</taxon>
        <taxon>Pseudomonadati</taxon>
        <taxon>Spirochaetota</taxon>
        <taxon>Spirochaetia</taxon>
        <taxon>Spirochaetales</taxon>
        <taxon>Treponemataceae</taxon>
        <taxon>Treponema</taxon>
    </lineage>
</organism>
<keyword id="KW-0511">Multifunctional enzyme</keyword>
<keyword id="KW-0560">Oxidoreductase</keyword>
<keyword id="KW-1185">Reference proteome</keyword>
<sequence length="291" mass="32802">MLANLQHLSDIQYRVTQQSATETPFKNEFWNSYQPGFYLDVVSGELLFLSEDKFDSGCGWPSFSAPAYARAVIEKEDRTHNMLRTEVRSRNANSHLGHVFKDGPPERGGLRYCINSAALRFVAREEGTALFAAGCFWSTEAYFRRVKGVLRVRVGYTGGTTKSPTYRNVCTGTTGHAEAVEILFDPQVISYEDLLKHFFRMHDPTSLNKQGGDVGTQYRSAIFYLSGTQKQQAETLMGRYAGAGKFTRPLVTTLEEARDFYPAEEYHQDYLTKNPGGYCHVSLHLASEPLE</sequence>
<protein>
    <recommendedName>
        <fullName>Peptide methionine sulfoxide reductase MsrB/MsrA</fullName>
    </recommendedName>
    <domain>
        <recommendedName>
            <fullName>Peptide methionine sulfoxide reductase MsrB</fullName>
            <ecNumber>1.8.4.12</ecNumber>
        </recommendedName>
        <alternativeName>
            <fullName>Peptide-methionine (R)-S-oxide reductase</fullName>
        </alternativeName>
    </domain>
    <domain>
        <recommendedName>
            <fullName>Peptide methionine sulfoxide reductase MsrA</fullName>
            <shortName>Protein-methionine-S-oxide reductase</shortName>
            <ecNumber>1.8.4.11</ecNumber>
        </recommendedName>
        <alternativeName>
            <fullName>Peptide-methionine (S)-S-oxide reductase</fullName>
            <shortName>Peptide Met(O) reductase</shortName>
        </alternativeName>
    </domain>
</protein>
<accession>O83641</accession>
<evidence type="ECO:0000250" key="1"/>
<evidence type="ECO:0000255" key="2">
    <source>
        <dbReference type="PROSITE-ProRule" id="PRU01126"/>
    </source>
</evidence>
<evidence type="ECO:0000305" key="3"/>
<gene>
    <name type="primary">msrAB</name>
    <name type="synonym">msrA</name>
    <name type="ordered locus">TP_0633</name>
</gene>